<feature type="chain" id="PRO_0000151776" description="GTP cyclohydrolase-2">
    <location>
        <begin position="1"/>
        <end position="196"/>
    </location>
</feature>
<feature type="active site" description="Proton acceptor" evidence="1">
    <location>
        <position position="126"/>
    </location>
</feature>
<feature type="active site" description="Nucleophile" evidence="1">
    <location>
        <position position="128"/>
    </location>
</feature>
<feature type="binding site" evidence="1">
    <location>
        <begin position="49"/>
        <end position="53"/>
    </location>
    <ligand>
        <name>GTP</name>
        <dbReference type="ChEBI" id="CHEBI:37565"/>
    </ligand>
</feature>
<feature type="binding site" evidence="1">
    <location>
        <position position="54"/>
    </location>
    <ligand>
        <name>Zn(2+)</name>
        <dbReference type="ChEBI" id="CHEBI:29105"/>
        <note>catalytic</note>
    </ligand>
</feature>
<feature type="binding site" evidence="1">
    <location>
        <position position="65"/>
    </location>
    <ligand>
        <name>Zn(2+)</name>
        <dbReference type="ChEBI" id="CHEBI:29105"/>
        <note>catalytic</note>
    </ligand>
</feature>
<feature type="binding site" evidence="1">
    <location>
        <position position="67"/>
    </location>
    <ligand>
        <name>Zn(2+)</name>
        <dbReference type="ChEBI" id="CHEBI:29105"/>
        <note>catalytic</note>
    </ligand>
</feature>
<feature type="binding site" evidence="1">
    <location>
        <position position="70"/>
    </location>
    <ligand>
        <name>GTP</name>
        <dbReference type="ChEBI" id="CHEBI:37565"/>
    </ligand>
</feature>
<feature type="binding site" evidence="1">
    <location>
        <begin position="92"/>
        <end position="94"/>
    </location>
    <ligand>
        <name>GTP</name>
        <dbReference type="ChEBI" id="CHEBI:37565"/>
    </ligand>
</feature>
<feature type="binding site" evidence="1">
    <location>
        <position position="114"/>
    </location>
    <ligand>
        <name>GTP</name>
        <dbReference type="ChEBI" id="CHEBI:37565"/>
    </ligand>
</feature>
<feature type="binding site" evidence="1">
    <location>
        <position position="149"/>
    </location>
    <ligand>
        <name>GTP</name>
        <dbReference type="ChEBI" id="CHEBI:37565"/>
    </ligand>
</feature>
<feature type="binding site" evidence="1">
    <location>
        <position position="154"/>
    </location>
    <ligand>
        <name>GTP</name>
        <dbReference type="ChEBI" id="CHEBI:37565"/>
    </ligand>
</feature>
<accession>P0A7I9</accession>
<accession>P25523</accession>
<accession>P78147</accession>
<evidence type="ECO:0000255" key="1">
    <source>
        <dbReference type="HAMAP-Rule" id="MF_00179"/>
    </source>
</evidence>
<dbReference type="EC" id="3.5.4.25" evidence="1"/>
<dbReference type="EMBL" id="AE005674">
    <property type="protein sequence ID" value="AAN42893.2"/>
    <property type="molecule type" value="Genomic_DNA"/>
</dbReference>
<dbReference type="EMBL" id="AE014073">
    <property type="protein sequence ID" value="AAP16777.1"/>
    <property type="molecule type" value="Genomic_DNA"/>
</dbReference>
<dbReference type="RefSeq" id="NP_707186.2">
    <property type="nucleotide sequence ID" value="NC_004337.2"/>
</dbReference>
<dbReference type="RefSeq" id="WP_001176295.1">
    <property type="nucleotide sequence ID" value="NZ_WPGW01000009.1"/>
</dbReference>
<dbReference type="SMR" id="P0A7I9"/>
<dbReference type="STRING" id="198214.SF1281"/>
<dbReference type="PaxDb" id="198214-SF1281"/>
<dbReference type="GeneID" id="1024226"/>
<dbReference type="GeneID" id="86946614"/>
<dbReference type="KEGG" id="sfl:SF1281"/>
<dbReference type="KEGG" id="sfx:S1364"/>
<dbReference type="PATRIC" id="fig|198214.7.peg.1502"/>
<dbReference type="HOGENOM" id="CLU_020273_2_1_6"/>
<dbReference type="UniPathway" id="UPA00275">
    <property type="reaction ID" value="UER00400"/>
</dbReference>
<dbReference type="Proteomes" id="UP000001006">
    <property type="component" value="Chromosome"/>
</dbReference>
<dbReference type="Proteomes" id="UP000002673">
    <property type="component" value="Chromosome"/>
</dbReference>
<dbReference type="GO" id="GO:0005829">
    <property type="term" value="C:cytosol"/>
    <property type="evidence" value="ECO:0007669"/>
    <property type="project" value="TreeGrafter"/>
</dbReference>
<dbReference type="GO" id="GO:0005525">
    <property type="term" value="F:GTP binding"/>
    <property type="evidence" value="ECO:0007669"/>
    <property type="project" value="UniProtKB-KW"/>
</dbReference>
<dbReference type="GO" id="GO:0003935">
    <property type="term" value="F:GTP cyclohydrolase II activity"/>
    <property type="evidence" value="ECO:0007669"/>
    <property type="project" value="UniProtKB-UniRule"/>
</dbReference>
<dbReference type="GO" id="GO:0008270">
    <property type="term" value="F:zinc ion binding"/>
    <property type="evidence" value="ECO:0007669"/>
    <property type="project" value="UniProtKB-UniRule"/>
</dbReference>
<dbReference type="GO" id="GO:0009231">
    <property type="term" value="P:riboflavin biosynthetic process"/>
    <property type="evidence" value="ECO:0007669"/>
    <property type="project" value="UniProtKB-UniRule"/>
</dbReference>
<dbReference type="CDD" id="cd00641">
    <property type="entry name" value="GTP_cyclohydro2"/>
    <property type="match status" value="1"/>
</dbReference>
<dbReference type="FunFam" id="3.40.50.10990:FF:000002">
    <property type="entry name" value="GTP cyclohydrolase-2"/>
    <property type="match status" value="1"/>
</dbReference>
<dbReference type="Gene3D" id="3.40.50.10990">
    <property type="entry name" value="GTP cyclohydrolase II"/>
    <property type="match status" value="1"/>
</dbReference>
<dbReference type="HAMAP" id="MF_00179">
    <property type="entry name" value="RibA"/>
    <property type="match status" value="1"/>
</dbReference>
<dbReference type="InterPro" id="IPR032677">
    <property type="entry name" value="GTP_cyclohydro_II"/>
</dbReference>
<dbReference type="InterPro" id="IPR000926">
    <property type="entry name" value="RibA"/>
</dbReference>
<dbReference type="InterPro" id="IPR036144">
    <property type="entry name" value="RibA-like_sf"/>
</dbReference>
<dbReference type="NCBIfam" id="NF001591">
    <property type="entry name" value="PRK00393.1"/>
    <property type="match status" value="1"/>
</dbReference>
<dbReference type="NCBIfam" id="TIGR00505">
    <property type="entry name" value="ribA"/>
    <property type="match status" value="1"/>
</dbReference>
<dbReference type="PANTHER" id="PTHR21327:SF18">
    <property type="entry name" value="3,4-DIHYDROXY-2-BUTANONE 4-PHOSPHATE SYNTHASE"/>
    <property type="match status" value="1"/>
</dbReference>
<dbReference type="PANTHER" id="PTHR21327">
    <property type="entry name" value="GTP CYCLOHYDROLASE II-RELATED"/>
    <property type="match status" value="1"/>
</dbReference>
<dbReference type="Pfam" id="PF00925">
    <property type="entry name" value="GTP_cyclohydro2"/>
    <property type="match status" value="1"/>
</dbReference>
<dbReference type="SUPFAM" id="SSF142695">
    <property type="entry name" value="RibA-like"/>
    <property type="match status" value="1"/>
</dbReference>
<sequence>MQLKRVAEAKLPTPWGDFLMVGFEELATGHDHVALVYGDISGHTPVLARVHSECLTGDALFSLRCDCGFQLEAALTQIAEEGRGILLYHRQEGRNIGLLNKIRAYALQDQGYDTVEANHQLGFAADERDFTLCADMFKLLGVNEVRLLTNNPKKVEILTEAGINIVERVPLIVGRNPNNEHYLDTKAEKMGHLLNK</sequence>
<comment type="function">
    <text evidence="1">Catalyzes the conversion of GTP to 2,5-diamino-6-ribosylamino-4(3H)-pyrimidinone 5'-phosphate (DARP), formate and pyrophosphate.</text>
</comment>
<comment type="catalytic activity">
    <reaction evidence="1">
        <text>GTP + 4 H2O = 2,5-diamino-6-hydroxy-4-(5-phosphoribosylamino)-pyrimidine + formate + 2 phosphate + 3 H(+)</text>
        <dbReference type="Rhea" id="RHEA:23704"/>
        <dbReference type="ChEBI" id="CHEBI:15377"/>
        <dbReference type="ChEBI" id="CHEBI:15378"/>
        <dbReference type="ChEBI" id="CHEBI:15740"/>
        <dbReference type="ChEBI" id="CHEBI:37565"/>
        <dbReference type="ChEBI" id="CHEBI:43474"/>
        <dbReference type="ChEBI" id="CHEBI:58614"/>
        <dbReference type="EC" id="3.5.4.25"/>
    </reaction>
</comment>
<comment type="cofactor">
    <cofactor evidence="1">
        <name>Zn(2+)</name>
        <dbReference type="ChEBI" id="CHEBI:29105"/>
    </cofactor>
    <text evidence="1">Binds 1 zinc ion per subunit.</text>
</comment>
<comment type="pathway">
    <text evidence="1">Cofactor biosynthesis; riboflavin biosynthesis; 5-amino-6-(D-ribitylamino)uracil from GTP: step 1/4.</text>
</comment>
<comment type="subunit">
    <text evidence="1">Homodimer.</text>
</comment>
<comment type="similarity">
    <text evidence="1">Belongs to the GTP cyclohydrolase II family.</text>
</comment>
<keyword id="KW-0342">GTP-binding</keyword>
<keyword id="KW-0378">Hydrolase</keyword>
<keyword id="KW-0479">Metal-binding</keyword>
<keyword id="KW-0547">Nucleotide-binding</keyword>
<keyword id="KW-1185">Reference proteome</keyword>
<keyword id="KW-0686">Riboflavin biosynthesis</keyword>
<keyword id="KW-0862">Zinc</keyword>
<reference key="1">
    <citation type="journal article" date="2002" name="Nucleic Acids Res.">
        <title>Genome sequence of Shigella flexneri 2a: insights into pathogenicity through comparison with genomes of Escherichia coli K12 and O157.</title>
        <authorList>
            <person name="Jin Q."/>
            <person name="Yuan Z."/>
            <person name="Xu J."/>
            <person name="Wang Y."/>
            <person name="Shen Y."/>
            <person name="Lu W."/>
            <person name="Wang J."/>
            <person name="Liu H."/>
            <person name="Yang J."/>
            <person name="Yang F."/>
            <person name="Zhang X."/>
            <person name="Zhang J."/>
            <person name="Yang G."/>
            <person name="Wu H."/>
            <person name="Qu D."/>
            <person name="Dong J."/>
            <person name="Sun L."/>
            <person name="Xue Y."/>
            <person name="Zhao A."/>
            <person name="Gao Y."/>
            <person name="Zhu J."/>
            <person name="Kan B."/>
            <person name="Ding K."/>
            <person name="Chen S."/>
            <person name="Cheng H."/>
            <person name="Yao Z."/>
            <person name="He B."/>
            <person name="Chen R."/>
            <person name="Ma D."/>
            <person name="Qiang B."/>
            <person name="Wen Y."/>
            <person name="Hou Y."/>
            <person name="Yu J."/>
        </authorList>
    </citation>
    <scope>NUCLEOTIDE SEQUENCE [LARGE SCALE GENOMIC DNA]</scope>
    <source>
        <strain>301 / Serotype 2a</strain>
    </source>
</reference>
<reference key="2">
    <citation type="journal article" date="2003" name="Infect. Immun.">
        <title>Complete genome sequence and comparative genomics of Shigella flexneri serotype 2a strain 2457T.</title>
        <authorList>
            <person name="Wei J."/>
            <person name="Goldberg M.B."/>
            <person name="Burland V."/>
            <person name="Venkatesan M.M."/>
            <person name="Deng W."/>
            <person name="Fournier G."/>
            <person name="Mayhew G.F."/>
            <person name="Plunkett G. III"/>
            <person name="Rose D.J."/>
            <person name="Darling A."/>
            <person name="Mau B."/>
            <person name="Perna N.T."/>
            <person name="Payne S.M."/>
            <person name="Runyen-Janecky L.J."/>
            <person name="Zhou S."/>
            <person name="Schwartz D.C."/>
            <person name="Blattner F.R."/>
        </authorList>
    </citation>
    <scope>NUCLEOTIDE SEQUENCE [LARGE SCALE GENOMIC DNA]</scope>
    <source>
        <strain>ATCC 700930 / 2457T / Serotype 2a</strain>
    </source>
</reference>
<proteinExistence type="inferred from homology"/>
<name>RIBA_SHIFL</name>
<organism>
    <name type="scientific">Shigella flexneri</name>
    <dbReference type="NCBI Taxonomy" id="623"/>
    <lineage>
        <taxon>Bacteria</taxon>
        <taxon>Pseudomonadati</taxon>
        <taxon>Pseudomonadota</taxon>
        <taxon>Gammaproteobacteria</taxon>
        <taxon>Enterobacterales</taxon>
        <taxon>Enterobacteriaceae</taxon>
        <taxon>Shigella</taxon>
    </lineage>
</organism>
<protein>
    <recommendedName>
        <fullName evidence="1">GTP cyclohydrolase-2</fullName>
        <ecNumber evidence="1">3.5.4.25</ecNumber>
    </recommendedName>
    <alternativeName>
        <fullName evidence="1">GTP cyclohydrolase II</fullName>
    </alternativeName>
</protein>
<gene>
    <name evidence="1" type="primary">ribA</name>
    <name type="ordered locus">SF1281</name>
    <name type="ordered locus">S1364</name>
</gene>